<feature type="chain" id="PRO_0000208355" description="Acetyl-coenzyme A synthetase">
    <location>
        <begin position="1"/>
        <end position="648"/>
    </location>
</feature>
<feature type="binding site" evidence="1">
    <location>
        <begin position="190"/>
        <end position="193"/>
    </location>
    <ligand>
        <name>CoA</name>
        <dbReference type="ChEBI" id="CHEBI:57287"/>
    </ligand>
</feature>
<feature type="binding site" evidence="1">
    <location>
        <position position="308"/>
    </location>
    <ligand>
        <name>CoA</name>
        <dbReference type="ChEBI" id="CHEBI:57287"/>
    </ligand>
</feature>
<feature type="binding site" evidence="1">
    <location>
        <position position="332"/>
    </location>
    <ligand>
        <name>CoA</name>
        <dbReference type="ChEBI" id="CHEBI:57287"/>
    </ligand>
</feature>
<feature type="binding site" evidence="1">
    <location>
        <begin position="384"/>
        <end position="386"/>
    </location>
    <ligand>
        <name>ATP</name>
        <dbReference type="ChEBI" id="CHEBI:30616"/>
    </ligand>
</feature>
<feature type="binding site" evidence="1">
    <location>
        <begin position="408"/>
        <end position="413"/>
    </location>
    <ligand>
        <name>ATP</name>
        <dbReference type="ChEBI" id="CHEBI:30616"/>
    </ligand>
</feature>
<feature type="binding site" evidence="1">
    <location>
        <position position="497"/>
    </location>
    <ligand>
        <name>ATP</name>
        <dbReference type="ChEBI" id="CHEBI:30616"/>
    </ligand>
</feature>
<feature type="binding site" evidence="1">
    <location>
        <position position="512"/>
    </location>
    <ligand>
        <name>ATP</name>
        <dbReference type="ChEBI" id="CHEBI:30616"/>
    </ligand>
</feature>
<feature type="binding site" evidence="1">
    <location>
        <position position="520"/>
    </location>
    <ligand>
        <name>CoA</name>
        <dbReference type="ChEBI" id="CHEBI:57287"/>
    </ligand>
</feature>
<feature type="binding site" evidence="1">
    <location>
        <position position="523"/>
    </location>
    <ligand>
        <name>ATP</name>
        <dbReference type="ChEBI" id="CHEBI:30616"/>
    </ligand>
</feature>
<feature type="binding site" evidence="1">
    <location>
        <position position="534"/>
    </location>
    <ligand>
        <name>Mg(2+)</name>
        <dbReference type="ChEBI" id="CHEBI:18420"/>
    </ligand>
</feature>
<feature type="binding site" evidence="1">
    <location>
        <position position="536"/>
    </location>
    <ligand>
        <name>Mg(2+)</name>
        <dbReference type="ChEBI" id="CHEBI:18420"/>
    </ligand>
</feature>
<feature type="binding site" evidence="1">
    <location>
        <position position="539"/>
    </location>
    <ligand>
        <name>Mg(2+)</name>
        <dbReference type="ChEBI" id="CHEBI:18420"/>
    </ligand>
</feature>
<feature type="binding site">
    <location>
        <position position="581"/>
    </location>
    <ligand>
        <name>CoA</name>
        <dbReference type="ChEBI" id="CHEBI:57287"/>
    </ligand>
</feature>
<feature type="modified residue" description="N6-acetyllysine" evidence="1">
    <location>
        <position position="606"/>
    </location>
</feature>
<feature type="mutagenesis site" description="Loss of activity." evidence="2">
    <original>G</original>
    <variation>I</variation>
    <location>
        <position position="263"/>
    </location>
</feature>
<feature type="mutagenesis site" description="Great decrease in activity." evidence="2">
    <original>G</original>
    <variation>I</variation>
    <location>
        <position position="266"/>
    </location>
</feature>
<feature type="mutagenesis site" description="Great decrease in activity." evidence="2">
    <original>K</original>
    <variation>G</variation>
    <location>
        <position position="269"/>
    </location>
</feature>
<feature type="mutagenesis site" description="Great decrease in activity." evidence="2">
    <original>E</original>
    <variation>Q</variation>
    <location>
        <position position="414"/>
    </location>
</feature>
<organism>
    <name type="scientific">Bradyrhizobium diazoefficiens (strain JCM 10833 / BCRC 13528 / IAM 13628 / NBRC 14792 / USDA 110)</name>
    <dbReference type="NCBI Taxonomy" id="224911"/>
    <lineage>
        <taxon>Bacteria</taxon>
        <taxon>Pseudomonadati</taxon>
        <taxon>Pseudomonadota</taxon>
        <taxon>Alphaproteobacteria</taxon>
        <taxon>Hyphomicrobiales</taxon>
        <taxon>Nitrobacteraceae</taxon>
        <taxon>Bradyrhizobium</taxon>
    </lineage>
</organism>
<keyword id="KW-0007">Acetylation</keyword>
<keyword id="KW-0067">ATP-binding</keyword>
<keyword id="KW-0436">Ligase</keyword>
<keyword id="KW-0460">Magnesium</keyword>
<keyword id="KW-0479">Metal-binding</keyword>
<keyword id="KW-0547">Nucleotide-binding</keyword>
<keyword id="KW-1185">Reference proteome</keyword>
<protein>
    <recommendedName>
        <fullName evidence="1">Acetyl-coenzyme A synthetase</fullName>
        <shortName evidence="1">AcCoA synthetase</shortName>
        <shortName evidence="1">Acs</shortName>
        <ecNumber evidence="1">6.2.1.1</ecNumber>
    </recommendedName>
    <alternativeName>
        <fullName evidence="1">Acetate--CoA ligase</fullName>
    </alternativeName>
    <alternativeName>
        <fullName evidence="1">Acyl-activating enzyme</fullName>
    </alternativeName>
</protein>
<proteinExistence type="evidence at protein level"/>
<accession>Q89WV5</accession>
<accession>Q93Q03</accession>
<comment type="function">
    <text evidence="1">Catalyzes the conversion of acetate into acetyl-CoA (AcCoA), an essential intermediate at the junction of anabolic and catabolic pathways. AcsA undergoes a two-step reaction. In the first half reaction, AcsA combines acetate with ATP to form acetyl-adenylate (AcAMP) intermediate. In the second half reaction, it can then transfer the acetyl group from AcAMP to the sulfhydryl group of CoA, forming the product AcCoA.</text>
</comment>
<comment type="catalytic activity">
    <reaction evidence="1">
        <text>acetate + ATP + CoA = acetyl-CoA + AMP + diphosphate</text>
        <dbReference type="Rhea" id="RHEA:23176"/>
        <dbReference type="ChEBI" id="CHEBI:30089"/>
        <dbReference type="ChEBI" id="CHEBI:30616"/>
        <dbReference type="ChEBI" id="CHEBI:33019"/>
        <dbReference type="ChEBI" id="CHEBI:57287"/>
        <dbReference type="ChEBI" id="CHEBI:57288"/>
        <dbReference type="ChEBI" id="CHEBI:456215"/>
        <dbReference type="EC" id="6.2.1.1"/>
    </reaction>
</comment>
<comment type="cofactor">
    <cofactor evidence="1">
        <name>Mg(2+)</name>
        <dbReference type="ChEBI" id="CHEBI:18420"/>
    </cofactor>
</comment>
<comment type="PTM">
    <text evidence="1">Acetylated. Deacetylation by the SIR2-homolog deacetylase activates the enzyme.</text>
</comment>
<comment type="similarity">
    <text evidence="1">Belongs to the ATP-dependent AMP-binding enzyme family.</text>
</comment>
<comment type="sequence caution" evidence="3">
    <conflict type="frameshift">
        <sequence resource="EMBL-CDS" id="AAK95494"/>
    </conflict>
</comment>
<gene>
    <name evidence="1" type="primary">acsA</name>
    <name type="ordered locus">blr0573</name>
</gene>
<evidence type="ECO:0000255" key="1">
    <source>
        <dbReference type="HAMAP-Rule" id="MF_01123"/>
    </source>
</evidence>
<evidence type="ECO:0000269" key="2">
    <source>
    </source>
</evidence>
<evidence type="ECO:0000305" key="3"/>
<reference key="1">
    <citation type="journal article" date="2002" name="DNA Res.">
        <title>Complete genomic sequence of nitrogen-fixing symbiotic bacterium Bradyrhizobium japonicum USDA110.</title>
        <authorList>
            <person name="Kaneko T."/>
            <person name="Nakamura Y."/>
            <person name="Sato S."/>
            <person name="Minamisawa K."/>
            <person name="Uchiumi T."/>
            <person name="Sasamoto S."/>
            <person name="Watanabe A."/>
            <person name="Idesawa K."/>
            <person name="Iriguchi M."/>
            <person name="Kawashima K."/>
            <person name="Kohara M."/>
            <person name="Matsumoto M."/>
            <person name="Shimpo S."/>
            <person name="Tsuruoka H."/>
            <person name="Wada T."/>
            <person name="Yamada M."/>
            <person name="Tabata S."/>
        </authorList>
    </citation>
    <scope>NUCLEOTIDE SEQUENCE [LARGE SCALE GENOMIC DNA]</scope>
    <source>
        <strain>JCM 10833 / BCRC 13528 / IAM 13628 / NBRC 14792 / USDA 110</strain>
    </source>
</reference>
<reference key="2">
    <citation type="journal article" date="2001" name="J. Biochem.">
        <title>Identification of active site residues in Bradyrhizobium japonicum acetyl-CoA synthetase.</title>
        <authorList>
            <person name="Lee H.Y."/>
            <person name="Na K.B."/>
            <person name="Koo H.M."/>
            <person name="Kim Y.S."/>
        </authorList>
    </citation>
    <scope>NUCLEOTIDE SEQUENCE [GENOMIC DNA] OF 1-605</scope>
    <scope>MUTAGENESIS OF GLY-263; GLY-266; LYS-269 AND GLU-414</scope>
    <source>
        <strain>JCM 10833 / BCRC 13528 / IAM 13628 / NBRC 14792 / USDA 110</strain>
    </source>
</reference>
<name>ACSA_BRADU</name>
<dbReference type="EC" id="6.2.1.1" evidence="1"/>
<dbReference type="EMBL" id="BA000040">
    <property type="protein sequence ID" value="BAC45838.1"/>
    <property type="molecule type" value="Genomic_DNA"/>
</dbReference>
<dbReference type="EMBL" id="AF290478">
    <property type="protein sequence ID" value="AAK95494.1"/>
    <property type="status" value="ALT_FRAME"/>
    <property type="molecule type" value="Genomic_DNA"/>
</dbReference>
<dbReference type="RefSeq" id="NP_767213.1">
    <property type="nucleotide sequence ID" value="NC_004463.1"/>
</dbReference>
<dbReference type="RefSeq" id="WP_028174953.1">
    <property type="nucleotide sequence ID" value="NC_004463.1"/>
</dbReference>
<dbReference type="SMR" id="Q89WV5"/>
<dbReference type="FunCoup" id="Q89WV5">
    <property type="interactions" value="684"/>
</dbReference>
<dbReference type="STRING" id="224911.AAV28_42145"/>
<dbReference type="EnsemblBacteria" id="BAC45838">
    <property type="protein sequence ID" value="BAC45838"/>
    <property type="gene ID" value="BAC45838"/>
</dbReference>
<dbReference type="GeneID" id="46495719"/>
<dbReference type="KEGG" id="bja:blr0573"/>
<dbReference type="PATRIC" id="fig|224911.44.peg.9115"/>
<dbReference type="eggNOG" id="COG0365">
    <property type="taxonomic scope" value="Bacteria"/>
</dbReference>
<dbReference type="HOGENOM" id="CLU_000022_3_6_5"/>
<dbReference type="InParanoid" id="Q89WV5"/>
<dbReference type="OrthoDB" id="9803968at2"/>
<dbReference type="Proteomes" id="UP000002526">
    <property type="component" value="Chromosome"/>
</dbReference>
<dbReference type="GO" id="GO:0005829">
    <property type="term" value="C:cytosol"/>
    <property type="evidence" value="ECO:0000318"/>
    <property type="project" value="GO_Central"/>
</dbReference>
<dbReference type="GO" id="GO:0003987">
    <property type="term" value="F:acetate-CoA ligase activity"/>
    <property type="evidence" value="ECO:0000318"/>
    <property type="project" value="GO_Central"/>
</dbReference>
<dbReference type="GO" id="GO:0016208">
    <property type="term" value="F:AMP binding"/>
    <property type="evidence" value="ECO:0007669"/>
    <property type="project" value="InterPro"/>
</dbReference>
<dbReference type="GO" id="GO:0005524">
    <property type="term" value="F:ATP binding"/>
    <property type="evidence" value="ECO:0007669"/>
    <property type="project" value="UniProtKB-KW"/>
</dbReference>
<dbReference type="GO" id="GO:0046872">
    <property type="term" value="F:metal ion binding"/>
    <property type="evidence" value="ECO:0007669"/>
    <property type="project" value="UniProtKB-KW"/>
</dbReference>
<dbReference type="GO" id="GO:0006085">
    <property type="term" value="P:acetyl-CoA biosynthetic process"/>
    <property type="evidence" value="ECO:0000318"/>
    <property type="project" value="GO_Central"/>
</dbReference>
<dbReference type="GO" id="GO:0019427">
    <property type="term" value="P:acetyl-CoA biosynthetic process from acetate"/>
    <property type="evidence" value="ECO:0007669"/>
    <property type="project" value="InterPro"/>
</dbReference>
<dbReference type="CDD" id="cd05966">
    <property type="entry name" value="ACS"/>
    <property type="match status" value="1"/>
</dbReference>
<dbReference type="FunFam" id="3.30.300.30:FF:000004">
    <property type="entry name" value="Acetyl-coenzyme A synthetase"/>
    <property type="match status" value="1"/>
</dbReference>
<dbReference type="FunFam" id="3.40.50.12780:FF:000001">
    <property type="entry name" value="Acetyl-coenzyme A synthetase"/>
    <property type="match status" value="1"/>
</dbReference>
<dbReference type="Gene3D" id="3.30.300.30">
    <property type="match status" value="1"/>
</dbReference>
<dbReference type="Gene3D" id="3.40.50.12780">
    <property type="entry name" value="N-terminal domain of ligase-like"/>
    <property type="match status" value="1"/>
</dbReference>
<dbReference type="HAMAP" id="MF_01123">
    <property type="entry name" value="Ac_CoA_synth"/>
    <property type="match status" value="1"/>
</dbReference>
<dbReference type="InterPro" id="IPR011904">
    <property type="entry name" value="Ac_CoA_lig"/>
</dbReference>
<dbReference type="InterPro" id="IPR032387">
    <property type="entry name" value="ACAS_N"/>
</dbReference>
<dbReference type="InterPro" id="IPR025110">
    <property type="entry name" value="AMP-bd_C"/>
</dbReference>
<dbReference type="InterPro" id="IPR045851">
    <property type="entry name" value="AMP-bd_C_sf"/>
</dbReference>
<dbReference type="InterPro" id="IPR020845">
    <property type="entry name" value="AMP-binding_CS"/>
</dbReference>
<dbReference type="InterPro" id="IPR000873">
    <property type="entry name" value="AMP-dep_synth/lig_dom"/>
</dbReference>
<dbReference type="InterPro" id="IPR042099">
    <property type="entry name" value="ANL_N_sf"/>
</dbReference>
<dbReference type="NCBIfam" id="TIGR02188">
    <property type="entry name" value="Ac_CoA_lig_AcsA"/>
    <property type="match status" value="1"/>
</dbReference>
<dbReference type="NCBIfam" id="NF001208">
    <property type="entry name" value="PRK00174.1"/>
    <property type="match status" value="1"/>
</dbReference>
<dbReference type="PANTHER" id="PTHR24095">
    <property type="entry name" value="ACETYL-COENZYME A SYNTHETASE"/>
    <property type="match status" value="1"/>
</dbReference>
<dbReference type="PANTHER" id="PTHR24095:SF14">
    <property type="entry name" value="ACETYL-COENZYME A SYNTHETASE 1"/>
    <property type="match status" value="1"/>
</dbReference>
<dbReference type="Pfam" id="PF16177">
    <property type="entry name" value="ACAS_N"/>
    <property type="match status" value="1"/>
</dbReference>
<dbReference type="Pfam" id="PF00501">
    <property type="entry name" value="AMP-binding"/>
    <property type="match status" value="1"/>
</dbReference>
<dbReference type="Pfam" id="PF13193">
    <property type="entry name" value="AMP-binding_C"/>
    <property type="match status" value="1"/>
</dbReference>
<dbReference type="SUPFAM" id="SSF56801">
    <property type="entry name" value="Acetyl-CoA synthetase-like"/>
    <property type="match status" value="1"/>
</dbReference>
<dbReference type="PROSITE" id="PS00455">
    <property type="entry name" value="AMP_BINDING"/>
    <property type="match status" value="1"/>
</dbReference>
<sequence length="648" mass="72030">MSEKIYDVPAEWAKRAWVDQAKYKEMYARSISDPNGFWAEQAKRIDWMKAPTKIENVSFAPGNVSIKWFEDGVLNVAHNCIDRHLHKRANQTAIIWEGDDPSQSRHITYKELHDEVCRMANILRTRNVKKGDRVTIYLPMIPEAAYAMLACARIGAIHSVVFAGFSPDSLAQRINDCQSKVIITADEGLRGGKKVPLKANVDAALAKADGVDWVVVVKRTGGKIDMNPTRDLWYHEAAAMVTTECPVEHMHAEDPLFILYTSGSTGQPKGVLHTSAGYLVYAAMTHQYVFDYHDGDIYWCTADVGWVTGHSYILYGPLANGATTLMFEGVPNYPDNSRFWNVIDKHKVNTFYTAPTAIRALMQGGDEPVKKTSRASLRLLGSVGEPINPEAWEWYHRVVGEDRCPIVDTWWQTETGGILITPLPGATKLKPGSATQPFFGVVPEIVDADGKVLEGETTGNLCLTRAWPGMMRTVYGDHARFEQTYFSTYKGKYFTGDGCRRDADGYYWITGRVDDVINVSGHRMGTAEVESALVAHEKVSEAAVVGFPHDIKGQGIYAYVTLMAGVQPTEDLRKELVTWVRKEIGPIASPDQIQFAPGLPKTRSGKIMRRILRKIAEDEPGSLGDTSTLADPAVVDDLVKNRQNKKSA</sequence>